<feature type="chain" id="PRO_0000385395" description="Uncharacterized protein 18">
    <location>
        <begin position="1"/>
        <end position="103"/>
    </location>
</feature>
<dbReference type="EMBL" id="AF440571">
    <property type="protein sequence ID" value="AAL27729.1"/>
    <property type="molecule type" value="Genomic_DNA"/>
</dbReference>
<dbReference type="RefSeq" id="NP_445683.1">
    <property type="nucleotide sequence ID" value="NC_003214.2"/>
</dbReference>
<dbReference type="SMR" id="Q914L2"/>
<dbReference type="GeneID" id="922311"/>
<dbReference type="KEGG" id="vg:922311"/>
<dbReference type="Proteomes" id="UP000007017">
    <property type="component" value="Segment"/>
</dbReference>
<keyword id="KW-1185">Reference proteome</keyword>
<organism>
    <name type="scientific">Sulfolobus islandicus filamentous virus (isolate Iceland/Hveragerdi)</name>
    <name type="common">SIFV</name>
    <dbReference type="NCBI Taxonomy" id="654908"/>
    <lineage>
        <taxon>Viruses</taxon>
        <taxon>Adnaviria</taxon>
        <taxon>Zilligvirae</taxon>
        <taxon>Taleaviricota</taxon>
        <taxon>Tokiviricetes</taxon>
        <taxon>Ligamenvirales</taxon>
        <taxon>Lipothrixviridae</taxon>
        <taxon>Betalipothrixvirus</taxon>
        <taxon>Sulfolobus islandicus filamentous virus</taxon>
    </lineage>
</organism>
<organismHost>
    <name type="scientific">Saccharolobus islandicus</name>
    <name type="common">Sulfolobus islandicus</name>
    <dbReference type="NCBI Taxonomy" id="43080"/>
</organismHost>
<proteinExistence type="predicted"/>
<name>Y018_SIFVH</name>
<sequence>MVEVKQKTIKYKLIIDTRDDSITLEGTIEAIITVKESEIKYRDKQEKFMGNMQTITENEIQNEVTDVKGDIDETLNKRFERYVNVLKTLEKIAEMIGAEIEVN</sequence>
<reference key="1">
    <citation type="journal article" date="2000" name="Virology">
        <title>A novel lipothrixvirus, SIFV, of the extremely thermophilic crenarchaeon Sulfolobus.</title>
        <authorList>
            <person name="Arnold H.P."/>
            <person name="Zillig W."/>
            <person name="Ziese U."/>
            <person name="Holz I."/>
            <person name="Crosby M."/>
            <person name="Utterback T."/>
            <person name="Weidmann J.F."/>
            <person name="Umayam L.A."/>
            <person name="Teffera K."/>
            <person name="Kristjanson J.K."/>
            <person name="Klenk H.P."/>
            <person name="Nelson K.E."/>
            <person name="Fraser C.M."/>
        </authorList>
    </citation>
    <scope>NUCLEOTIDE SEQUENCE [GENOMIC DNA]</scope>
</reference>
<accession>Q914L2</accession>
<protein>
    <recommendedName>
        <fullName>Uncharacterized protein 18</fullName>
    </recommendedName>
</protein>
<gene>
    <name type="primary">SIFV0018</name>
</gene>